<accession>Q59975</accession>
<accession>Q59974</accession>
<name>AROA_SYNY3</name>
<comment type="function">
    <text evidence="1">Catalyzes the transfer of the enolpyruvyl moiety of phosphoenolpyruvate (PEP) to the 5-hydroxyl of shikimate-3-phosphate (S3P) to produce enolpyruvyl shikimate-3-phosphate and inorganic phosphate.</text>
</comment>
<comment type="catalytic activity">
    <reaction evidence="1">
        <text>3-phosphoshikimate + phosphoenolpyruvate = 5-O-(1-carboxyvinyl)-3-phosphoshikimate + phosphate</text>
        <dbReference type="Rhea" id="RHEA:21256"/>
        <dbReference type="ChEBI" id="CHEBI:43474"/>
        <dbReference type="ChEBI" id="CHEBI:57701"/>
        <dbReference type="ChEBI" id="CHEBI:58702"/>
        <dbReference type="ChEBI" id="CHEBI:145989"/>
        <dbReference type="EC" id="2.5.1.19"/>
    </reaction>
    <physiologicalReaction direction="left-to-right" evidence="1">
        <dbReference type="Rhea" id="RHEA:21257"/>
    </physiologicalReaction>
</comment>
<comment type="pathway">
    <text evidence="1">Metabolic intermediate biosynthesis; chorismate biosynthesis; chorismate from D-erythrose 4-phosphate and phosphoenolpyruvate: step 6/7.</text>
</comment>
<comment type="subunit">
    <text evidence="1">Monomer.</text>
</comment>
<comment type="subcellular location">
    <subcellularLocation>
        <location evidence="1">Cytoplasm</location>
    </subcellularLocation>
</comment>
<comment type="similarity">
    <text evidence="1 2">Belongs to the EPSP synthase family.</text>
</comment>
<keyword id="KW-0028">Amino-acid biosynthesis</keyword>
<keyword id="KW-0057">Aromatic amino acid biosynthesis</keyword>
<keyword id="KW-0963">Cytoplasm</keyword>
<keyword id="KW-1185">Reference proteome</keyword>
<keyword id="KW-0808">Transferase</keyword>
<dbReference type="EC" id="2.5.1.19" evidence="1"/>
<dbReference type="EMBL" id="X75325">
    <property type="protein sequence ID" value="CAA53074.1"/>
    <property type="molecule type" value="Genomic_DNA"/>
</dbReference>
<dbReference type="EMBL" id="BA000022">
    <property type="protein sequence ID" value="BAA18477.1"/>
    <property type="molecule type" value="Genomic_DNA"/>
</dbReference>
<dbReference type="EMBL" id="X72784">
    <property type="protein sequence ID" value="CAA51291.1"/>
    <property type="molecule type" value="Genomic_DNA"/>
</dbReference>
<dbReference type="PIR" id="S76218">
    <property type="entry name" value="S76218"/>
</dbReference>
<dbReference type="SMR" id="Q59975"/>
<dbReference type="FunCoup" id="Q59975">
    <property type="interactions" value="351"/>
</dbReference>
<dbReference type="IntAct" id="Q59975">
    <property type="interactions" value="1"/>
</dbReference>
<dbReference type="STRING" id="1148.gene:10499357"/>
<dbReference type="PaxDb" id="1148-1653564"/>
<dbReference type="EnsemblBacteria" id="BAA18477">
    <property type="protein sequence ID" value="BAA18477"/>
    <property type="gene ID" value="BAA18477"/>
</dbReference>
<dbReference type="KEGG" id="syn:slr0444"/>
<dbReference type="eggNOG" id="COG0128">
    <property type="taxonomic scope" value="Bacteria"/>
</dbReference>
<dbReference type="InParanoid" id="Q59975"/>
<dbReference type="PhylomeDB" id="Q59975"/>
<dbReference type="UniPathway" id="UPA00053">
    <property type="reaction ID" value="UER00089"/>
</dbReference>
<dbReference type="Proteomes" id="UP000001425">
    <property type="component" value="Chromosome"/>
</dbReference>
<dbReference type="GO" id="GO:0005737">
    <property type="term" value="C:cytoplasm"/>
    <property type="evidence" value="ECO:0007669"/>
    <property type="project" value="UniProtKB-SubCell"/>
</dbReference>
<dbReference type="GO" id="GO:0003866">
    <property type="term" value="F:3-phosphoshikimate 1-carboxyvinyltransferase activity"/>
    <property type="evidence" value="ECO:0000318"/>
    <property type="project" value="GO_Central"/>
</dbReference>
<dbReference type="GO" id="GO:0008652">
    <property type="term" value="P:amino acid biosynthetic process"/>
    <property type="evidence" value="ECO:0007669"/>
    <property type="project" value="UniProtKB-KW"/>
</dbReference>
<dbReference type="GO" id="GO:0009073">
    <property type="term" value="P:aromatic amino acid family biosynthetic process"/>
    <property type="evidence" value="ECO:0007669"/>
    <property type="project" value="UniProtKB-KW"/>
</dbReference>
<dbReference type="GO" id="GO:0009423">
    <property type="term" value="P:chorismate biosynthetic process"/>
    <property type="evidence" value="ECO:0000318"/>
    <property type="project" value="GO_Central"/>
</dbReference>
<dbReference type="CDD" id="cd01556">
    <property type="entry name" value="EPSP_synthase"/>
    <property type="match status" value="1"/>
</dbReference>
<dbReference type="FunFam" id="3.65.10.10:FF:000005">
    <property type="entry name" value="3-phosphoshikimate 1-carboxyvinyltransferase"/>
    <property type="match status" value="1"/>
</dbReference>
<dbReference type="FunFam" id="3.65.10.10:FF:000006">
    <property type="entry name" value="3-phosphoshikimate 1-carboxyvinyltransferase"/>
    <property type="match status" value="1"/>
</dbReference>
<dbReference type="Gene3D" id="3.65.10.10">
    <property type="entry name" value="Enolpyruvate transferase domain"/>
    <property type="match status" value="2"/>
</dbReference>
<dbReference type="HAMAP" id="MF_00210">
    <property type="entry name" value="EPSP_synth"/>
    <property type="match status" value="1"/>
</dbReference>
<dbReference type="InterPro" id="IPR001986">
    <property type="entry name" value="Enolpyruvate_Tfrase_dom"/>
</dbReference>
<dbReference type="InterPro" id="IPR036968">
    <property type="entry name" value="Enolpyruvate_Tfrase_sf"/>
</dbReference>
<dbReference type="InterPro" id="IPR006264">
    <property type="entry name" value="EPSP_synthase"/>
</dbReference>
<dbReference type="InterPro" id="IPR023193">
    <property type="entry name" value="EPSP_synthase_CS"/>
</dbReference>
<dbReference type="InterPro" id="IPR013792">
    <property type="entry name" value="RNA3'P_cycl/enolpyr_Trfase_a/b"/>
</dbReference>
<dbReference type="NCBIfam" id="TIGR01356">
    <property type="entry name" value="aroA"/>
    <property type="match status" value="1"/>
</dbReference>
<dbReference type="PANTHER" id="PTHR21090">
    <property type="entry name" value="AROM/DEHYDROQUINATE SYNTHASE"/>
    <property type="match status" value="1"/>
</dbReference>
<dbReference type="PANTHER" id="PTHR21090:SF5">
    <property type="entry name" value="PENTAFUNCTIONAL AROM POLYPEPTIDE"/>
    <property type="match status" value="1"/>
</dbReference>
<dbReference type="Pfam" id="PF00275">
    <property type="entry name" value="EPSP_synthase"/>
    <property type="match status" value="1"/>
</dbReference>
<dbReference type="PIRSF" id="PIRSF000505">
    <property type="entry name" value="EPSPS"/>
    <property type="match status" value="1"/>
</dbReference>
<dbReference type="SUPFAM" id="SSF55205">
    <property type="entry name" value="EPT/RTPC-like"/>
    <property type="match status" value="1"/>
</dbReference>
<dbReference type="PROSITE" id="PS00104">
    <property type="entry name" value="EPSP_SYNTHASE_1"/>
    <property type="match status" value="1"/>
</dbReference>
<dbReference type="PROSITE" id="PS00885">
    <property type="entry name" value="EPSP_SYNTHASE_2"/>
    <property type="match status" value="1"/>
</dbReference>
<protein>
    <recommendedName>
        <fullName evidence="1">3-phosphoshikimate 1-carboxyvinyltransferase</fullName>
        <ecNumber evidence="1">2.5.1.19</ecNumber>
    </recommendedName>
    <alternativeName>
        <fullName evidence="1">5-enolpyruvylshikimate-3-phosphate synthase</fullName>
        <shortName evidence="1">EPSP synthase</shortName>
        <shortName evidence="1">EPSPS</shortName>
    </alternativeName>
</protein>
<proteinExistence type="inferred from homology"/>
<gene>
    <name evidence="1" type="primary">aroA</name>
    <name type="ordered locus">slr0444</name>
</gene>
<evidence type="ECO:0000255" key="1">
    <source>
        <dbReference type="HAMAP-Rule" id="MF_00210"/>
    </source>
</evidence>
<evidence type="ECO:0000305" key="2"/>
<reference key="1">
    <citation type="journal article" date="1994" name="Gene">
        <title>An aroA homologue from Synechocystis sp. PCC 6803.</title>
        <authorList>
            <person name="dalla Chiesa M."/>
            <person name="Mayes S.R."/>
            <person name="Maskell D.S."/>
            <person name="Nixon P.J."/>
            <person name="Barber J."/>
        </authorList>
    </citation>
    <scope>NUCLEOTIDE SEQUENCE [GENOMIC DNA]</scope>
</reference>
<reference key="2">
    <citation type="journal article" date="1996" name="DNA Res.">
        <title>Sequence analysis of the genome of the unicellular cyanobacterium Synechocystis sp. strain PCC6803. II. Sequence determination of the entire genome and assignment of potential protein-coding regions.</title>
        <authorList>
            <person name="Kaneko T."/>
            <person name="Sato S."/>
            <person name="Kotani H."/>
            <person name="Tanaka A."/>
            <person name="Asamizu E."/>
            <person name="Nakamura Y."/>
            <person name="Miyajima N."/>
            <person name="Hirosawa M."/>
            <person name="Sugiura M."/>
            <person name="Sasamoto S."/>
            <person name="Kimura T."/>
            <person name="Hosouchi T."/>
            <person name="Matsuno A."/>
            <person name="Muraki A."/>
            <person name="Nakazaki N."/>
            <person name="Naruo K."/>
            <person name="Okumura S."/>
            <person name="Shimpo S."/>
            <person name="Takeuchi C."/>
            <person name="Wada T."/>
            <person name="Watanabe A."/>
            <person name="Yamada M."/>
            <person name="Yasuda M."/>
            <person name="Tabata S."/>
        </authorList>
    </citation>
    <scope>NUCLEOTIDE SEQUENCE [LARGE SCALE GENOMIC DNA]</scope>
    <source>
        <strain>ATCC 27184 / PCC 6803 / Kazusa</strain>
    </source>
</reference>
<reference key="3">
    <citation type="journal article" date="1993" name="FEBS Lett.">
        <title>The genes aroA and trnQ are located upstream of psbO in the chromosome of Synechocystis 6803.</title>
        <authorList>
            <person name="Mayes S.R."/>
            <person name="dalla Chiesa M."/>
            <person name="Zhang Z."/>
            <person name="Barber J."/>
        </authorList>
    </citation>
    <scope>NUCLEOTIDE SEQUENCE [GENOMIC DNA] OF 103-194</scope>
</reference>
<organism>
    <name type="scientific">Synechocystis sp. (strain ATCC 27184 / PCC 6803 / Kazusa)</name>
    <dbReference type="NCBI Taxonomy" id="1111708"/>
    <lineage>
        <taxon>Bacteria</taxon>
        <taxon>Bacillati</taxon>
        <taxon>Cyanobacteriota</taxon>
        <taxon>Cyanophyceae</taxon>
        <taxon>Synechococcales</taxon>
        <taxon>Merismopediaceae</taxon>
        <taxon>Synechocystis</taxon>
    </lineage>
</organism>
<sequence length="447" mass="47047">MALLSLNNHQSHQRLTVNPPAQGVALTGRLRVPGDKSISHRALMLGAIATGETIIEGLLLGEDPRSTAHCFRAMGAEISELNSEKIIVQGRGLGQLQEPSTVLDAGNSGTTMRLMLGLLAGQKDCLFTVTGDDSLRHRPMSRVIQPLQQMGAKIWARSNGKFAPLAVQGSQLKPIHYHSPIASAQVKSCLLLAGLTTEGDTTVTEPALSRDHSERMLQAFGAKLTIDPVTHSVTVHGPAHLTGQRVVVPGDISSAAFWLVAASILPGSELLVENVGINPTRTGVLEVLAQMGADITPENERLVTGEPVADLRVRASHLQGCTFGGEIIPRLIDEIPILAVAAAFAEGTTRIEDAAELRVKESDRLAAIASELGKMGAKVTEFDDGLEIQGGSPLQGAEVDSLTDHRIAMALAIAALGSGGQTIINRAEAAAISYPEFFGTLGQVAQG</sequence>
<feature type="chain" id="PRO_0000088311" description="3-phosphoshikimate 1-carboxyvinyltransferase">
    <location>
        <begin position="1"/>
        <end position="447"/>
    </location>
</feature>
<feature type="active site" description="Proton acceptor" evidence="1">
    <location>
        <position position="333"/>
    </location>
</feature>
<feature type="binding site" evidence="1">
    <location>
        <position position="36"/>
    </location>
    <ligand>
        <name>3-phosphoshikimate</name>
        <dbReference type="ChEBI" id="CHEBI:145989"/>
    </ligand>
</feature>
<feature type="binding site" evidence="1">
    <location>
        <position position="36"/>
    </location>
    <ligand>
        <name>phosphoenolpyruvate</name>
        <dbReference type="ChEBI" id="CHEBI:58702"/>
    </ligand>
</feature>
<feature type="binding site" evidence="1">
    <location>
        <position position="37"/>
    </location>
    <ligand>
        <name>3-phosphoshikimate</name>
        <dbReference type="ChEBI" id="CHEBI:145989"/>
    </ligand>
</feature>
<feature type="binding site" evidence="1">
    <location>
        <position position="41"/>
    </location>
    <ligand>
        <name>3-phosphoshikimate</name>
        <dbReference type="ChEBI" id="CHEBI:145989"/>
    </ligand>
</feature>
<feature type="binding site" evidence="1">
    <location>
        <position position="109"/>
    </location>
    <ligand>
        <name>phosphoenolpyruvate</name>
        <dbReference type="ChEBI" id="CHEBI:58702"/>
    </ligand>
</feature>
<feature type="binding site" evidence="1">
    <location>
        <position position="138"/>
    </location>
    <ligand>
        <name>phosphoenolpyruvate</name>
        <dbReference type="ChEBI" id="CHEBI:58702"/>
    </ligand>
</feature>
<feature type="binding site" evidence="1">
    <location>
        <position position="183"/>
    </location>
    <ligand>
        <name>3-phosphoshikimate</name>
        <dbReference type="ChEBI" id="CHEBI:145989"/>
    </ligand>
</feature>
<feature type="binding site" evidence="1">
    <location>
        <position position="185"/>
    </location>
    <ligand>
        <name>3-phosphoshikimate</name>
        <dbReference type="ChEBI" id="CHEBI:145989"/>
    </ligand>
</feature>
<feature type="binding site" evidence="1">
    <location>
        <position position="185"/>
    </location>
    <ligand>
        <name>phosphoenolpyruvate</name>
        <dbReference type="ChEBI" id="CHEBI:58702"/>
    </ligand>
</feature>
<feature type="binding site" evidence="1">
    <location>
        <position position="333"/>
    </location>
    <ligand>
        <name>3-phosphoshikimate</name>
        <dbReference type="ChEBI" id="CHEBI:145989"/>
    </ligand>
</feature>
<feature type="binding site" evidence="1">
    <location>
        <position position="360"/>
    </location>
    <ligand>
        <name>3-phosphoshikimate</name>
        <dbReference type="ChEBI" id="CHEBI:145989"/>
    </ligand>
</feature>
<feature type="binding site" evidence="1">
    <location>
        <position position="364"/>
    </location>
    <ligand>
        <name>phosphoenolpyruvate</name>
        <dbReference type="ChEBI" id="CHEBI:58702"/>
    </ligand>
</feature>
<feature type="binding site" evidence="1">
    <location>
        <position position="406"/>
    </location>
    <ligand>
        <name>phosphoenolpyruvate</name>
        <dbReference type="ChEBI" id="CHEBI:58702"/>
    </ligand>
</feature>